<comment type="function">
    <text evidence="1">Functions in the N-end rule pathway of protein degradation where it conjugates Leu from its aminoacyl-tRNA to the N-termini of proteins containing an N-terminal aspartate or glutamate.</text>
</comment>
<comment type="catalytic activity">
    <reaction evidence="1">
        <text>N-terminal L-glutamyl-[protein] + L-leucyl-tRNA(Leu) = N-terminal L-leucyl-L-glutamyl-[protein] + tRNA(Leu) + H(+)</text>
        <dbReference type="Rhea" id="RHEA:50412"/>
        <dbReference type="Rhea" id="RHEA-COMP:9613"/>
        <dbReference type="Rhea" id="RHEA-COMP:9622"/>
        <dbReference type="Rhea" id="RHEA-COMP:12664"/>
        <dbReference type="Rhea" id="RHEA-COMP:12668"/>
        <dbReference type="ChEBI" id="CHEBI:15378"/>
        <dbReference type="ChEBI" id="CHEBI:64721"/>
        <dbReference type="ChEBI" id="CHEBI:78442"/>
        <dbReference type="ChEBI" id="CHEBI:78494"/>
        <dbReference type="ChEBI" id="CHEBI:133041"/>
        <dbReference type="EC" id="2.3.2.29"/>
    </reaction>
</comment>
<comment type="catalytic activity">
    <reaction evidence="1">
        <text>N-terminal L-aspartyl-[protein] + L-leucyl-tRNA(Leu) = N-terminal L-leucyl-L-aspartyl-[protein] + tRNA(Leu) + H(+)</text>
        <dbReference type="Rhea" id="RHEA:50420"/>
        <dbReference type="Rhea" id="RHEA-COMP:9613"/>
        <dbReference type="Rhea" id="RHEA-COMP:9622"/>
        <dbReference type="Rhea" id="RHEA-COMP:12669"/>
        <dbReference type="Rhea" id="RHEA-COMP:12674"/>
        <dbReference type="ChEBI" id="CHEBI:15378"/>
        <dbReference type="ChEBI" id="CHEBI:64720"/>
        <dbReference type="ChEBI" id="CHEBI:78442"/>
        <dbReference type="ChEBI" id="CHEBI:78494"/>
        <dbReference type="ChEBI" id="CHEBI:133042"/>
        <dbReference type="EC" id="2.3.2.29"/>
    </reaction>
</comment>
<comment type="subcellular location">
    <subcellularLocation>
        <location evidence="1">Cytoplasm</location>
    </subcellularLocation>
</comment>
<comment type="similarity">
    <text evidence="1">Belongs to the R-transferase family. Bpt subfamily.</text>
</comment>
<feature type="chain" id="PRO_1000147800" description="Aspartate/glutamate leucyltransferase">
    <location>
        <begin position="1"/>
        <end position="253"/>
    </location>
</feature>
<gene>
    <name evidence="1" type="primary">bpt</name>
    <name type="ordered locus">Avi_1601</name>
</gene>
<protein>
    <recommendedName>
        <fullName evidence="1">Aspartate/glutamate leucyltransferase</fullName>
        <ecNumber evidence="1">2.3.2.29</ecNumber>
    </recommendedName>
</protein>
<proteinExistence type="inferred from homology"/>
<name>BPT_ALLAM</name>
<evidence type="ECO:0000255" key="1">
    <source>
        <dbReference type="HAMAP-Rule" id="MF_00689"/>
    </source>
</evidence>
<organism>
    <name type="scientific">Allorhizobium ampelinum (strain ATCC BAA-846 / DSM 112012 / S4)</name>
    <name type="common">Agrobacterium vitis (strain S4)</name>
    <dbReference type="NCBI Taxonomy" id="311402"/>
    <lineage>
        <taxon>Bacteria</taxon>
        <taxon>Pseudomonadati</taxon>
        <taxon>Pseudomonadota</taxon>
        <taxon>Alphaproteobacteria</taxon>
        <taxon>Hyphomicrobiales</taxon>
        <taxon>Rhizobiaceae</taxon>
        <taxon>Rhizobium/Agrobacterium group</taxon>
        <taxon>Allorhizobium</taxon>
        <taxon>Allorhizobium ampelinum</taxon>
    </lineage>
</organism>
<accession>B9JV68</accession>
<dbReference type="EC" id="2.3.2.29" evidence="1"/>
<dbReference type="EMBL" id="CP000633">
    <property type="protein sequence ID" value="ACM36148.1"/>
    <property type="molecule type" value="Genomic_DNA"/>
</dbReference>
<dbReference type="RefSeq" id="WP_015915572.1">
    <property type="nucleotide sequence ID" value="NC_011989.1"/>
</dbReference>
<dbReference type="SMR" id="B9JV68"/>
<dbReference type="STRING" id="311402.Avi_1601"/>
<dbReference type="KEGG" id="avi:Avi_1601"/>
<dbReference type="eggNOG" id="COG2935">
    <property type="taxonomic scope" value="Bacteria"/>
</dbReference>
<dbReference type="HOGENOM" id="CLU_077607_1_0_5"/>
<dbReference type="Proteomes" id="UP000001596">
    <property type="component" value="Chromosome 1"/>
</dbReference>
<dbReference type="GO" id="GO:0005737">
    <property type="term" value="C:cytoplasm"/>
    <property type="evidence" value="ECO:0007669"/>
    <property type="project" value="UniProtKB-SubCell"/>
</dbReference>
<dbReference type="GO" id="GO:0004057">
    <property type="term" value="F:arginyl-tRNA--protein transferase activity"/>
    <property type="evidence" value="ECO:0007669"/>
    <property type="project" value="InterPro"/>
</dbReference>
<dbReference type="GO" id="GO:0008914">
    <property type="term" value="F:leucyl-tRNA--protein transferase activity"/>
    <property type="evidence" value="ECO:0007669"/>
    <property type="project" value="UniProtKB-UniRule"/>
</dbReference>
<dbReference type="GO" id="GO:0071596">
    <property type="term" value="P:ubiquitin-dependent protein catabolic process via the N-end rule pathway"/>
    <property type="evidence" value="ECO:0007669"/>
    <property type="project" value="InterPro"/>
</dbReference>
<dbReference type="HAMAP" id="MF_00689">
    <property type="entry name" value="Bpt"/>
    <property type="match status" value="1"/>
</dbReference>
<dbReference type="InterPro" id="IPR016181">
    <property type="entry name" value="Acyl_CoA_acyltransferase"/>
</dbReference>
<dbReference type="InterPro" id="IPR017138">
    <property type="entry name" value="Asp_Glu_LeuTrfase"/>
</dbReference>
<dbReference type="InterPro" id="IPR030700">
    <property type="entry name" value="N-end_Aminoacyl_Trfase"/>
</dbReference>
<dbReference type="InterPro" id="IPR007472">
    <property type="entry name" value="N-end_Aminoacyl_Trfase_C"/>
</dbReference>
<dbReference type="InterPro" id="IPR007471">
    <property type="entry name" value="N-end_Aminoacyl_Trfase_N"/>
</dbReference>
<dbReference type="NCBIfam" id="NF002342">
    <property type="entry name" value="PRK01305.1-3"/>
    <property type="match status" value="1"/>
</dbReference>
<dbReference type="NCBIfam" id="NF002343">
    <property type="entry name" value="PRK01305.1-4"/>
    <property type="match status" value="1"/>
</dbReference>
<dbReference type="NCBIfam" id="NF002346">
    <property type="entry name" value="PRK01305.2-3"/>
    <property type="match status" value="1"/>
</dbReference>
<dbReference type="PANTHER" id="PTHR21367">
    <property type="entry name" value="ARGININE-TRNA-PROTEIN TRANSFERASE 1"/>
    <property type="match status" value="1"/>
</dbReference>
<dbReference type="PANTHER" id="PTHR21367:SF1">
    <property type="entry name" value="ARGINYL-TRNA--PROTEIN TRANSFERASE 1"/>
    <property type="match status" value="1"/>
</dbReference>
<dbReference type="Pfam" id="PF04377">
    <property type="entry name" value="ATE_C"/>
    <property type="match status" value="1"/>
</dbReference>
<dbReference type="Pfam" id="PF04376">
    <property type="entry name" value="ATE_N"/>
    <property type="match status" value="1"/>
</dbReference>
<dbReference type="PIRSF" id="PIRSF037208">
    <property type="entry name" value="ATE_pro_prd"/>
    <property type="match status" value="1"/>
</dbReference>
<dbReference type="SUPFAM" id="SSF55729">
    <property type="entry name" value="Acyl-CoA N-acyltransferases (Nat)"/>
    <property type="match status" value="1"/>
</dbReference>
<keyword id="KW-0012">Acyltransferase</keyword>
<keyword id="KW-0963">Cytoplasm</keyword>
<keyword id="KW-1185">Reference proteome</keyword>
<keyword id="KW-0808">Transferase</keyword>
<sequence>MNTQAATSPQFYLTAPAPCPYLAGEMERKVFTHLVGPRAPEMNDLLTQGGFRRSQNIAYRPACETCRACISVRIVAREFQPNRTMRRVAGVNADLTSSVFAAQPSTEQFSLFRTYLDHRHQQGGMSDMSALDFAIMVEDSHVKTKVIEYRLPKVDEDSDRPGELVAVALSDILSDGLSMVYSFFNPAMEKRSLGTFMVLDHIRRANEMGLPHVYLGYWVNGSRKMGYKIRFLPQEHLLSQGWTRYEPESGVEE</sequence>
<reference key="1">
    <citation type="journal article" date="2009" name="J. Bacteriol.">
        <title>Genome sequences of three Agrobacterium biovars help elucidate the evolution of multichromosome genomes in bacteria.</title>
        <authorList>
            <person name="Slater S.C."/>
            <person name="Goldman B.S."/>
            <person name="Goodner B."/>
            <person name="Setubal J.C."/>
            <person name="Farrand S.K."/>
            <person name="Nester E.W."/>
            <person name="Burr T.J."/>
            <person name="Banta L."/>
            <person name="Dickerman A.W."/>
            <person name="Paulsen I."/>
            <person name="Otten L."/>
            <person name="Suen G."/>
            <person name="Welch R."/>
            <person name="Almeida N.F."/>
            <person name="Arnold F."/>
            <person name="Burton O.T."/>
            <person name="Du Z."/>
            <person name="Ewing A."/>
            <person name="Godsy E."/>
            <person name="Heisel S."/>
            <person name="Houmiel K.L."/>
            <person name="Jhaveri J."/>
            <person name="Lu J."/>
            <person name="Miller N.M."/>
            <person name="Norton S."/>
            <person name="Chen Q."/>
            <person name="Phoolcharoen W."/>
            <person name="Ohlin V."/>
            <person name="Ondrusek D."/>
            <person name="Pride N."/>
            <person name="Stricklin S.L."/>
            <person name="Sun J."/>
            <person name="Wheeler C."/>
            <person name="Wilson L."/>
            <person name="Zhu H."/>
            <person name="Wood D.W."/>
        </authorList>
    </citation>
    <scope>NUCLEOTIDE SEQUENCE [LARGE SCALE GENOMIC DNA]</scope>
    <source>
        <strain>ATCC BAA-846 / DSM 112012 / S4</strain>
    </source>
</reference>